<proteinExistence type="inferred from homology"/>
<protein>
    <recommendedName>
        <fullName evidence="1">Ubiquinone/menaquinone biosynthesis C-methyltransferase UbiE</fullName>
        <ecNumber evidence="1">2.1.1.163</ecNumber>
        <ecNumber evidence="1">2.1.1.201</ecNumber>
    </recommendedName>
    <alternativeName>
        <fullName evidence="1">2-methoxy-6-polyprenyl-1,4-benzoquinol methylase</fullName>
    </alternativeName>
    <alternativeName>
        <fullName evidence="1">Demethylmenaquinone methyltransferase</fullName>
    </alternativeName>
</protein>
<gene>
    <name evidence="1" type="primary">ubiE</name>
    <name type="ordered locus">Bcenmc03_2759</name>
</gene>
<name>UBIE_BURO0</name>
<feature type="chain" id="PRO_1000187737" description="Ubiquinone/menaquinone biosynthesis C-methyltransferase UbiE">
    <location>
        <begin position="1"/>
        <end position="243"/>
    </location>
</feature>
<feature type="binding site" evidence="1">
    <location>
        <position position="69"/>
    </location>
    <ligand>
        <name>S-adenosyl-L-methionine</name>
        <dbReference type="ChEBI" id="CHEBI:59789"/>
    </ligand>
</feature>
<feature type="binding site" evidence="1">
    <location>
        <position position="90"/>
    </location>
    <ligand>
        <name>S-adenosyl-L-methionine</name>
        <dbReference type="ChEBI" id="CHEBI:59789"/>
    </ligand>
</feature>
<feature type="binding site" evidence="1">
    <location>
        <begin position="116"/>
        <end position="117"/>
    </location>
    <ligand>
        <name>S-adenosyl-L-methionine</name>
        <dbReference type="ChEBI" id="CHEBI:59789"/>
    </ligand>
</feature>
<evidence type="ECO:0000255" key="1">
    <source>
        <dbReference type="HAMAP-Rule" id="MF_01813"/>
    </source>
</evidence>
<reference key="1">
    <citation type="submission" date="2008-02" db="EMBL/GenBank/DDBJ databases">
        <title>Complete sequence of chromosome 1 of Burkholderia cenocepacia MC0-3.</title>
        <authorList>
            <person name="Copeland A."/>
            <person name="Lucas S."/>
            <person name="Lapidus A."/>
            <person name="Barry K."/>
            <person name="Bruce D."/>
            <person name="Goodwin L."/>
            <person name="Glavina del Rio T."/>
            <person name="Dalin E."/>
            <person name="Tice H."/>
            <person name="Pitluck S."/>
            <person name="Chain P."/>
            <person name="Malfatti S."/>
            <person name="Shin M."/>
            <person name="Vergez L."/>
            <person name="Schmutz J."/>
            <person name="Larimer F."/>
            <person name="Land M."/>
            <person name="Hauser L."/>
            <person name="Kyrpides N."/>
            <person name="Mikhailova N."/>
            <person name="Tiedje J."/>
            <person name="Richardson P."/>
        </authorList>
    </citation>
    <scope>NUCLEOTIDE SEQUENCE [LARGE SCALE GENOMIC DNA]</scope>
    <source>
        <strain>MC0-3</strain>
    </source>
</reference>
<dbReference type="EC" id="2.1.1.163" evidence="1"/>
<dbReference type="EC" id="2.1.1.201" evidence="1"/>
<dbReference type="EMBL" id="CP000958">
    <property type="protein sequence ID" value="ACA91919.1"/>
    <property type="molecule type" value="Genomic_DNA"/>
</dbReference>
<dbReference type="RefSeq" id="WP_006477837.1">
    <property type="nucleotide sequence ID" value="NC_010508.1"/>
</dbReference>
<dbReference type="SMR" id="B1JYJ6"/>
<dbReference type="GeneID" id="83049544"/>
<dbReference type="KEGG" id="bcm:Bcenmc03_2759"/>
<dbReference type="HOGENOM" id="CLU_037990_0_0_4"/>
<dbReference type="UniPathway" id="UPA00079">
    <property type="reaction ID" value="UER00169"/>
</dbReference>
<dbReference type="UniPathway" id="UPA00232"/>
<dbReference type="Proteomes" id="UP000002169">
    <property type="component" value="Chromosome 1"/>
</dbReference>
<dbReference type="GO" id="GO:0008425">
    <property type="term" value="F:2-methoxy-6-polyprenyl-1,4-benzoquinol methyltransferase activity"/>
    <property type="evidence" value="ECO:0007669"/>
    <property type="project" value="UniProtKB-UniRule"/>
</dbReference>
<dbReference type="GO" id="GO:0043770">
    <property type="term" value="F:demethylmenaquinone methyltransferase activity"/>
    <property type="evidence" value="ECO:0007669"/>
    <property type="project" value="UniProtKB-UniRule"/>
</dbReference>
<dbReference type="GO" id="GO:0009060">
    <property type="term" value="P:aerobic respiration"/>
    <property type="evidence" value="ECO:0007669"/>
    <property type="project" value="UniProtKB-UniRule"/>
</dbReference>
<dbReference type="GO" id="GO:0009234">
    <property type="term" value="P:menaquinone biosynthetic process"/>
    <property type="evidence" value="ECO:0007669"/>
    <property type="project" value="UniProtKB-UniRule"/>
</dbReference>
<dbReference type="GO" id="GO:0032259">
    <property type="term" value="P:methylation"/>
    <property type="evidence" value="ECO:0007669"/>
    <property type="project" value="UniProtKB-KW"/>
</dbReference>
<dbReference type="CDD" id="cd02440">
    <property type="entry name" value="AdoMet_MTases"/>
    <property type="match status" value="1"/>
</dbReference>
<dbReference type="Gene3D" id="3.40.50.150">
    <property type="entry name" value="Vaccinia Virus protein VP39"/>
    <property type="match status" value="1"/>
</dbReference>
<dbReference type="HAMAP" id="MF_01813">
    <property type="entry name" value="MenG_UbiE_methyltr"/>
    <property type="match status" value="1"/>
</dbReference>
<dbReference type="InterPro" id="IPR029063">
    <property type="entry name" value="SAM-dependent_MTases_sf"/>
</dbReference>
<dbReference type="InterPro" id="IPR004033">
    <property type="entry name" value="UbiE/COQ5_MeTrFase"/>
</dbReference>
<dbReference type="InterPro" id="IPR023576">
    <property type="entry name" value="UbiE/COQ5_MeTrFase_CS"/>
</dbReference>
<dbReference type="NCBIfam" id="TIGR01934">
    <property type="entry name" value="MenG_MenH_UbiE"/>
    <property type="match status" value="1"/>
</dbReference>
<dbReference type="NCBIfam" id="NF001240">
    <property type="entry name" value="PRK00216.1-1"/>
    <property type="match status" value="1"/>
</dbReference>
<dbReference type="PANTHER" id="PTHR43591:SF24">
    <property type="entry name" value="2-METHOXY-6-POLYPRENYL-1,4-BENZOQUINOL METHYLASE, MITOCHONDRIAL"/>
    <property type="match status" value="1"/>
</dbReference>
<dbReference type="PANTHER" id="PTHR43591">
    <property type="entry name" value="METHYLTRANSFERASE"/>
    <property type="match status" value="1"/>
</dbReference>
<dbReference type="Pfam" id="PF01209">
    <property type="entry name" value="Ubie_methyltran"/>
    <property type="match status" value="1"/>
</dbReference>
<dbReference type="SUPFAM" id="SSF53335">
    <property type="entry name" value="S-adenosyl-L-methionine-dependent methyltransferases"/>
    <property type="match status" value="1"/>
</dbReference>
<dbReference type="PROSITE" id="PS51608">
    <property type="entry name" value="SAM_MT_UBIE"/>
    <property type="match status" value="1"/>
</dbReference>
<dbReference type="PROSITE" id="PS01183">
    <property type="entry name" value="UBIE_1"/>
    <property type="match status" value="1"/>
</dbReference>
<dbReference type="PROSITE" id="PS01184">
    <property type="entry name" value="UBIE_2"/>
    <property type="match status" value="1"/>
</dbReference>
<keyword id="KW-0474">Menaquinone biosynthesis</keyword>
<keyword id="KW-0489">Methyltransferase</keyword>
<keyword id="KW-0949">S-adenosyl-L-methionine</keyword>
<keyword id="KW-0808">Transferase</keyword>
<keyword id="KW-0831">Ubiquinone biosynthesis</keyword>
<sequence>MSKTHFGFESVEENEKAKKVAGVFHSVASNYDLMNDLMSAGMHRAWKAFTIAQANVRPGFKVLDIAAGTGDLTKSFAKAAGPTGEVWHTDINESMLRVGRDRLLDKGVVTPSLLCDAEKIPFPDNYFDVVTVAFGLRNMTHKDAALAEMRRVTKPGGRVMVLEFSKVWDPLKKAYDLYSFKVLPWLGDKFAKDAESYRYLAESIRMHPDQDTLKTMMEQAGLDAVKYYNLSGGVVALHLGTKY</sequence>
<accession>B1JYJ6</accession>
<organism>
    <name type="scientific">Burkholderia orbicola (strain MC0-3)</name>
    <dbReference type="NCBI Taxonomy" id="406425"/>
    <lineage>
        <taxon>Bacteria</taxon>
        <taxon>Pseudomonadati</taxon>
        <taxon>Pseudomonadota</taxon>
        <taxon>Betaproteobacteria</taxon>
        <taxon>Burkholderiales</taxon>
        <taxon>Burkholderiaceae</taxon>
        <taxon>Burkholderia</taxon>
        <taxon>Burkholderia cepacia complex</taxon>
        <taxon>Burkholderia orbicola</taxon>
    </lineage>
</organism>
<comment type="function">
    <text evidence="1">Methyltransferase required for the conversion of demethylmenaquinol (DMKH2) to menaquinol (MKH2) and the conversion of 2-polyprenyl-6-methoxy-1,4-benzoquinol (DDMQH2) to 2-polyprenyl-3-methyl-6-methoxy-1,4-benzoquinol (DMQH2).</text>
</comment>
<comment type="catalytic activity">
    <reaction evidence="1">
        <text>a 2-demethylmenaquinol + S-adenosyl-L-methionine = a menaquinol + S-adenosyl-L-homocysteine + H(+)</text>
        <dbReference type="Rhea" id="RHEA:42640"/>
        <dbReference type="Rhea" id="RHEA-COMP:9539"/>
        <dbReference type="Rhea" id="RHEA-COMP:9563"/>
        <dbReference type="ChEBI" id="CHEBI:15378"/>
        <dbReference type="ChEBI" id="CHEBI:18151"/>
        <dbReference type="ChEBI" id="CHEBI:55437"/>
        <dbReference type="ChEBI" id="CHEBI:57856"/>
        <dbReference type="ChEBI" id="CHEBI:59789"/>
        <dbReference type="EC" id="2.1.1.163"/>
    </reaction>
</comment>
<comment type="catalytic activity">
    <reaction evidence="1">
        <text>a 2-methoxy-6-(all-trans-polyprenyl)benzene-1,4-diol + S-adenosyl-L-methionine = a 5-methoxy-2-methyl-3-(all-trans-polyprenyl)benzene-1,4-diol + S-adenosyl-L-homocysteine + H(+)</text>
        <dbReference type="Rhea" id="RHEA:28286"/>
        <dbReference type="Rhea" id="RHEA-COMP:10858"/>
        <dbReference type="Rhea" id="RHEA-COMP:10859"/>
        <dbReference type="ChEBI" id="CHEBI:15378"/>
        <dbReference type="ChEBI" id="CHEBI:57856"/>
        <dbReference type="ChEBI" id="CHEBI:59789"/>
        <dbReference type="ChEBI" id="CHEBI:84166"/>
        <dbReference type="ChEBI" id="CHEBI:84167"/>
        <dbReference type="EC" id="2.1.1.201"/>
    </reaction>
</comment>
<comment type="pathway">
    <text evidence="1">Quinol/quinone metabolism; menaquinone biosynthesis; menaquinol from 1,4-dihydroxy-2-naphthoate: step 2/2.</text>
</comment>
<comment type="pathway">
    <text evidence="1">Cofactor biosynthesis; ubiquinone biosynthesis.</text>
</comment>
<comment type="similarity">
    <text evidence="1">Belongs to the class I-like SAM-binding methyltransferase superfamily. MenG/UbiE family.</text>
</comment>